<feature type="chain" id="PRO_0000100135" description="Non-structural polyprotein pORF1">
    <location>
        <begin position="1"/>
        <end position="1693"/>
    </location>
</feature>
<feature type="domain" description="Alphavirus-like MT" evidence="9">
    <location>
        <begin position="56"/>
        <end position="240"/>
    </location>
</feature>
<feature type="domain" description="Macro" evidence="7">
    <location>
        <begin position="775"/>
        <end position="921"/>
    </location>
</feature>
<feature type="domain" description="(+)RNA virus helicase ATP-binding">
    <location>
        <begin position="934"/>
        <end position="1082"/>
    </location>
</feature>
<feature type="domain" description="(+)RNA virus helicase C-terminal">
    <location>
        <begin position="1083"/>
        <end position="1216"/>
    </location>
</feature>
<feature type="domain" description="RdRp catalytic" evidence="8">
    <location>
        <begin position="1454"/>
        <end position="1565"/>
    </location>
</feature>
<feature type="region of interest" description="Methyltransferase" evidence="1">
    <location>
        <begin position="60"/>
        <end position="240"/>
    </location>
</feature>
<feature type="region of interest" description="Y-domain" evidence="4">
    <location>
        <begin position="241"/>
        <end position="439"/>
    </location>
</feature>
<feature type="region of interest" description="Protease" evidence="15">
    <location>
        <begin position="442"/>
        <end position="509"/>
    </location>
</feature>
<feature type="region of interest" description="Zinc-binding" evidence="11">
    <location>
        <begin position="510"/>
        <end position="691"/>
    </location>
</feature>
<feature type="region of interest" description="Hinge" evidence="1">
    <location>
        <begin position="712"/>
        <end position="778"/>
    </location>
</feature>
<feature type="region of interest" description="Disordered" evidence="10">
    <location>
        <begin position="712"/>
        <end position="771"/>
    </location>
</feature>
<feature type="region of interest" description="X-domain" evidence="1">
    <location>
        <begin position="785"/>
        <end position="942"/>
    </location>
</feature>
<feature type="region of interest" description="NTPase/helicase" evidence="1">
    <location>
        <begin position="960"/>
        <end position="1204"/>
    </location>
</feature>
<feature type="region of interest" description="RNA-directed RNA polymerase" evidence="1">
    <location>
        <begin position="1207"/>
        <end position="1693"/>
    </location>
</feature>
<feature type="compositionally biased region" description="Low complexity" evidence="10">
    <location>
        <begin position="725"/>
        <end position="735"/>
    </location>
</feature>
<feature type="compositionally biased region" description="Pro residues" evidence="10">
    <location>
        <begin position="736"/>
        <end position="748"/>
    </location>
</feature>
<feature type="binding site" evidence="16">
    <location>
        <position position="671"/>
    </location>
    <ligand>
        <name>Zn(2+)</name>
        <dbReference type="ChEBI" id="CHEBI:29105"/>
    </ligand>
</feature>
<feature type="binding site" evidence="16">
    <location>
        <position position="673"/>
    </location>
    <ligand>
        <name>Zn(2+)</name>
        <dbReference type="ChEBI" id="CHEBI:29105"/>
    </ligand>
</feature>
<feature type="binding site" evidence="11">
    <location>
        <position position="686"/>
    </location>
    <ligand>
        <name>Zn(2+)</name>
        <dbReference type="ChEBI" id="CHEBI:29105"/>
    </ligand>
</feature>
<feature type="binding site" evidence="6">
    <location>
        <begin position="975"/>
        <end position="982"/>
    </location>
    <ligand>
        <name>ATP</name>
        <dbReference type="ChEBI" id="CHEBI:30616"/>
    </ligand>
</feature>
<feature type="disulfide bond" evidence="4">
    <location>
        <begin position="434"/>
        <end position="481"/>
    </location>
</feature>
<feature type="sequence variant" description="In strain: Isolate pSK-HEV-2 and Isolate pSK-HEV-3.">
    <original>R</original>
    <variation>G</variation>
    <location>
        <position position="766"/>
    </location>
</feature>
<feature type="mutagenesis site" description="Complete loss of increase in thermal stability in the presence of zinc." evidence="11">
    <original>H</original>
    <variation>A</variation>
    <location>
        <position position="671"/>
    </location>
</feature>
<feature type="mutagenesis site" description="Complete loss of increase in thermal stability in the presence of zinc." evidence="11">
    <original>E</original>
    <variation>A</variation>
    <location>
        <position position="673"/>
    </location>
</feature>
<feature type="mutagenesis site" description="Complete loss of increase in thermal stability in the presence of zinc." evidence="11">
    <original>H</original>
    <variation>A</variation>
    <location>
        <position position="686"/>
    </location>
</feature>
<feature type="strand" evidence="17">
    <location>
        <begin position="519"/>
        <end position="524"/>
    </location>
</feature>
<feature type="helix" evidence="17">
    <location>
        <begin position="525"/>
        <end position="528"/>
    </location>
</feature>
<feature type="helix" evidence="17">
    <location>
        <begin position="529"/>
        <end position="534"/>
    </location>
</feature>
<feature type="helix" evidence="17">
    <location>
        <begin position="539"/>
        <end position="546"/>
    </location>
</feature>
<feature type="strand" evidence="17">
    <location>
        <begin position="549"/>
        <end position="557"/>
    </location>
</feature>
<feature type="strand" evidence="17">
    <location>
        <begin position="560"/>
        <end position="567"/>
    </location>
</feature>
<feature type="strand" evidence="17">
    <location>
        <begin position="570"/>
        <end position="577"/>
    </location>
</feature>
<feature type="strand" evidence="17">
    <location>
        <begin position="593"/>
        <end position="595"/>
    </location>
</feature>
<feature type="helix" evidence="17">
    <location>
        <begin position="596"/>
        <end position="598"/>
    </location>
</feature>
<feature type="strand" evidence="17">
    <location>
        <begin position="600"/>
        <end position="603"/>
    </location>
</feature>
<feature type="strand" evidence="17">
    <location>
        <begin position="606"/>
        <end position="613"/>
    </location>
</feature>
<feature type="strand" evidence="17">
    <location>
        <begin position="616"/>
        <end position="623"/>
    </location>
</feature>
<feature type="strand" evidence="17">
    <location>
        <begin position="626"/>
        <end position="632"/>
    </location>
</feature>
<feature type="helix" evidence="17">
    <location>
        <begin position="642"/>
        <end position="658"/>
    </location>
</feature>
<feature type="helix" evidence="17">
    <location>
        <begin position="672"/>
        <end position="675"/>
    </location>
</feature>
<feature type="turn" evidence="17">
    <location>
        <begin position="678"/>
        <end position="681"/>
    </location>
</feature>
<organism>
    <name type="scientific">Hepatitis E virus genotype 1 (isolate Human/Pakistan/Sar-55)</name>
    <name type="common">HEV-1</name>
    <dbReference type="NCBI Taxonomy" id="33774"/>
    <lineage>
        <taxon>Viruses</taxon>
        <taxon>Riboviria</taxon>
        <taxon>Orthornavirae</taxon>
        <taxon>Kitrinoviricota</taxon>
        <taxon>Alsuviricetes</taxon>
        <taxon>Hepelivirales</taxon>
        <taxon>Hepeviridae</taxon>
        <taxon>Orthohepevirinae</taxon>
        <taxon>Paslahepevirus</taxon>
        <taxon>Hepatitis E virus</taxon>
    </lineage>
</organism>
<reference key="1">
    <citation type="journal article" date="1992" name="Proc. Natl. Acad. Sci. U.S.A.">
        <title>Characterization of a prototype strain of hepatitis E virus.</title>
        <authorList>
            <person name="Tsarev S.A."/>
            <person name="Emerson S.U."/>
            <person name="Reyes G.R."/>
            <person name="Tsareva T.S."/>
            <person name="Legters L.J."/>
            <person name="Malik I.A."/>
            <person name="Iqbal M."/>
            <person name="Purcell R.H."/>
        </authorList>
    </citation>
    <scope>NUCLEOTIDE SEQUENCE [GENOMIC RNA]</scope>
</reference>
<reference key="2">
    <citation type="journal article" date="2001" name="Proc. Natl. Acad. Sci. U.S.A.">
        <title>Recombinant hepatitis E virus genomes infectious for primates: importance of capping and discovery of a cis-reactive element.</title>
        <authorList>
            <person name="Emerson S.U."/>
            <person name="Zhang M."/>
            <person name="Meng X.J."/>
            <person name="Nguyen H."/>
            <person name="St Claire M."/>
            <person name="Govindarajan S."/>
            <person name="Huang Y.K."/>
            <person name="Purcell R.H."/>
        </authorList>
    </citation>
    <scope>NUCLEOTIDE SEQUENCE [GENOMIC RNA]</scope>
    <source>
        <strain>Isolate pSK-HEV-2</strain>
        <strain>Isolate pSK-HEV-3</strain>
    </source>
</reference>
<reference key="3">
    <citation type="journal article" date="2023" name="J. Virol.">
        <title>Hepatitis E Virus Protease Inhibits the Activity of Eukaryotic Initiation Factor 2-Alpha Kinase 4 and Promotes Virus Survival.</title>
        <authorList>
            <person name="Kumar A."/>
            <person name="Subramani C."/>
            <person name="Raj S."/>
            <person name="Ranjith-Kumar C.T."/>
            <person name="Surjit M."/>
        </authorList>
    </citation>
    <scope>INTERACTION WITH HOST EIF2AK4 (PROTEASE)</scope>
</reference>
<reference evidence="17" key="4">
    <citation type="journal article" date="2019" name="J. Virol.">
        <title>First Crystal Structure of a Nonstructural Hepatitis E Viral Protein Identifies a Putative Novel Zinc-Binding Protein.</title>
        <authorList>
            <person name="Proudfoot A."/>
            <person name="Hyrina A."/>
            <person name="Holdorf M."/>
            <person name="Frank A.O."/>
            <person name="Bussiere D."/>
        </authorList>
    </citation>
    <scope>X-RAY CRYSTALLOGRAPHY (1.76 ANGSTROMS) OF 510-691</scope>
    <scope>MUTAGENESIS OF HIS-671; GLU-673 AND HIS-686</scope>
    <scope>DOMAIN</scope>
    <scope>ZINC-BINDING</scope>
</reference>
<keyword id="KW-0002">3D-structure</keyword>
<keyword id="KW-0067">ATP-binding</keyword>
<keyword id="KW-1015">Disulfide bond</keyword>
<keyword id="KW-0347">Helicase</keyword>
<keyword id="KW-1035">Host cytoplasm</keyword>
<keyword id="KW-0378">Hydrolase</keyword>
<keyword id="KW-0460">Magnesium</keyword>
<keyword id="KW-0479">Metal-binding</keyword>
<keyword id="KW-0489">Methyltransferase</keyword>
<keyword id="KW-0547">Nucleotide-binding</keyword>
<keyword id="KW-0548">Nucleotidyltransferase</keyword>
<keyword id="KW-0645">Protease</keyword>
<keyword id="KW-0694">RNA-binding</keyword>
<keyword id="KW-0696">RNA-directed RNA polymerase</keyword>
<keyword id="KW-0788">Thiol protease</keyword>
<keyword id="KW-0808">Transferase</keyword>
<keyword id="KW-0693">Viral RNA replication</keyword>
<keyword id="KW-0862">Zinc</keyword>
<sequence length="1693" mass="185150">MEAHQFIKAPGITTAIEQAALAAANSALANAVVVRPFLSHQQIEILINLMQPRQLVFRPEVFWNHPIQRVIHNELELYCRARSGRCLEIGAHPRSINDNPNVVHRCFLRPAGRDVQRWYTAPTRGPAANCRRSALRGLPAADRTYCFDGFSGCNFPAETGIALYSLHDMSPSDVAEAMFRHGMTRLYAALHLPPEVLLPPGTYRTASYLLIHDGRRVVVTYEGDTSAGYNHDVSNLRSWIRTTKVTGDHPLVIERVRAIGCHFVLLLTAAPEPSPMPYVPYPRSTEVYVRSIFGPGGTPSLFPTSCSTKSTFHAVPAHIWDRLMLFGATLDDQAFCCSRLMTYLRGISYKVTVGTLVANEGWNASEDALTAVITAAYLTICHQRYLRTQAISKGMRRLEREHAQKFITRLYSWLFEKSGRDYIPGRQLEFYAQCRRWLSAGFHLDPRVLVFDESAPCHCRTAIRKAVSKFCCFMKWLGQECTCFLQPAEGVVGDQGHDNEAYEGSDVDPAESAISDISGSYVVPGTALQPLYQALDLPAEIVARAGRLTATVKVSQVDGRIDCETLLGNKTFRTSFVDGAVLETNGPERHNLSFDASQSTMAAGPFSLTYAASAAGLEVRYVAAGLDHRAVFAPGVSPRSAPGEVTAFCSALYRFNREAQRLSLTGNFWFHPEGLLGPFAPFSPGHVWESANPFCGESTLYTRTWSEVDAVPSPAQPDLGFTSEPSIPSRAATPTPAAPLPPPAPDPSPTLSAPARGEPAPGATARAPAITHQTARHRRLLFTYPDGSKVFAGSLFESTCTWLVNASNVDHRPGGGLCHAFYQRYPASFDAASFVMRDGAAAYTLTPRPIIHAVAPDYRLEHNPKRLEAAYRETCSRLGTAAYPLLGTGIYQVPIGPSFDAWERNHRPGDELYLPELAARWFEANRPTCPTLTITEDVARTANLAIELDSATDVGRACAGCRVTPGVVQYQFTAGVPGSGKSRSITQADVDVVVVPTRELRNAWRRRGFAAFTPHTAARVTQGRRVVIDEAPSLPPHLLLLHMQRAATVHLLGDPNQIPAIDFEHAGLVPAIRPDLAPTSWWHVTHRCPADVCELIRGAYPMIQTTSRVLRSLFWGEPAVGQKLVFTQAAKAANPGSVTVHEAQGATYTETTIIATADARGLIQSSRAHAIVALTRHTEKCVIIDAPGLLREVGISDAIVNNFFLAGGEIGHQRPSVIPRGNPDANVDTLAAFPPSCQISAFHQLAEELGHRPAPVAAVLPPCPELEQGLLYLPQELTTCDSVVTFELTDIVHCRMAAPSQRKAVLSTLVGRYGRRTKLYNASHSDVRDSLARFIPAIGPVQVTTCELYELVEAMVEKGQDGSAVLELDLCSRDVSRITFFQKDCNKFTTGETIAHGKVGQGISAWSKTFCALFGPWFRAIEKAILALLPQGVFYGDAFDDTVFSAAVAAAKASMVFENDFSEFDSTQNNFSLGLECAIMEECGMPQWLIRLYHLIRSAWILQAPKESLRGFWKKHSGEPGTLLWNTVWNMAVITHCYDFRDLQVAAFKGDDSIVLCSEYRQSPGAAVLIAGCGLKLKVDFRPIGLYAGVVVAPGLGALPDVVRFAGRLTEKNWGPGPERAEQLRLAVSDFLRKLTNVAQMCVDVVSRVYGVSPGLVHNLIGMLQAVADGKAHFTESVKPVLDLTNSILCRVE</sequence>
<evidence type="ECO:0000250" key="1"/>
<evidence type="ECO:0000250" key="2">
    <source>
        <dbReference type="UniProtKB" id="P29324"/>
    </source>
</evidence>
<evidence type="ECO:0000250" key="3">
    <source>
        <dbReference type="UniProtKB" id="Q04610"/>
    </source>
</evidence>
<evidence type="ECO:0000250" key="4">
    <source>
        <dbReference type="UniProtKB" id="Q81862"/>
    </source>
</evidence>
<evidence type="ECO:0000250" key="5">
    <source>
        <dbReference type="UniProtKB" id="Q9WC28"/>
    </source>
</evidence>
<evidence type="ECO:0000255" key="6"/>
<evidence type="ECO:0000255" key="7">
    <source>
        <dbReference type="PROSITE-ProRule" id="PRU00490"/>
    </source>
</evidence>
<evidence type="ECO:0000255" key="8">
    <source>
        <dbReference type="PROSITE-ProRule" id="PRU00539"/>
    </source>
</evidence>
<evidence type="ECO:0000255" key="9">
    <source>
        <dbReference type="PROSITE-ProRule" id="PRU01079"/>
    </source>
</evidence>
<evidence type="ECO:0000256" key="10">
    <source>
        <dbReference type="SAM" id="MobiDB-lite"/>
    </source>
</evidence>
<evidence type="ECO:0000269" key="11">
    <source>
    </source>
</evidence>
<evidence type="ECO:0000269" key="12">
    <source>
    </source>
</evidence>
<evidence type="ECO:0000303" key="13">
    <source>
    </source>
</evidence>
<evidence type="ECO:0000305" key="14"/>
<evidence type="ECO:0000305" key="15">
    <source>
    </source>
</evidence>
<evidence type="ECO:0007744" key="16">
    <source>
        <dbReference type="PDB" id="6NU9"/>
    </source>
</evidence>
<evidence type="ECO:0007829" key="17">
    <source>
        <dbReference type="PDB" id="6NU9"/>
    </source>
</evidence>
<accession>P33424</accession>
<accession>Q8UYD6</accession>
<proteinExistence type="evidence at protein level"/>
<comment type="function">
    <text evidence="4">Methyltransferase: Displays a capping enzyme activity. This function is necessary since all viral RNAs are synthesized in the cytoplasm, and host capping enzymes are restricted to the nucleus. The enzymatic reaction involves a covalent link between 7-methyl-GMP and the methyltransferase, whereas eukaryotic capping enzymes form a covalent complex only with GMP. Methyltransferase catalyzes transfer of a methyl group from S-adenosylmethionine to GTP and GDP to yield m(7)GTP or m(7)GDP. GDP is a better substrate than GTP. This enzyme also displays guanylyltransferase activity to form a covalent complex, methyltransferase-m(7)GMP, from which 7-methyl-GMP is transferred to the mRNA to create the cap structure.</text>
</comment>
<comment type="function">
    <text evidence="4">Y-domain: Indispensable for virus replication.</text>
</comment>
<comment type="function">
    <text evidence="4">Putative protease: The putative protease domain although necessary for replication of the virus may not be a protease but rather a structural Zn(2+)-binding domain. Inhibits induction of IFN-beta by MDA5 and RIG-I pathways and down-regulates the expression of MDA5.</text>
</comment>
<comment type="function">
    <text evidence="2 4">NTPase/helicase: Multi-functional protein that exhibits NTPase and RNA unwinding activities (By similarity). Hydrolyzes all NTPs efficiently and unwinds RNA duplexes containing 5' overhangs (By similarity). Possesses a sequence independent RNA-5'-triphosphatase (RTPase) activity suggestive of its role in forming viral cap structure. Also participates in viral genome replication, RNA translocation and genome packaging/unpackaging (By similarity).</text>
</comment>
<comment type="function">
    <text evidence="4 5">RNA-directed RNA polymerase: Plays an essential role in the virus replication (By similarity). Binds to the 3'-end of the genomic RNA to initiate viral replication (By similarity).</text>
</comment>
<comment type="catalytic activity">
    <reaction evidence="8">
        <text>RNA(n) + a ribonucleoside 5'-triphosphate = RNA(n+1) + diphosphate</text>
        <dbReference type="Rhea" id="RHEA:21248"/>
        <dbReference type="Rhea" id="RHEA-COMP:14527"/>
        <dbReference type="Rhea" id="RHEA-COMP:17342"/>
        <dbReference type="ChEBI" id="CHEBI:33019"/>
        <dbReference type="ChEBI" id="CHEBI:61557"/>
        <dbReference type="ChEBI" id="CHEBI:140395"/>
        <dbReference type="EC" id="2.7.7.48"/>
    </reaction>
</comment>
<comment type="catalytic activity">
    <reaction evidence="4">
        <text>GTP + S-adenosyl-L-methionine = N(7)-methyl-GTP + S-adenosyl-L-homocysteine</text>
        <dbReference type="Rhea" id="RHEA:46948"/>
        <dbReference type="ChEBI" id="CHEBI:37565"/>
        <dbReference type="ChEBI" id="CHEBI:57856"/>
        <dbReference type="ChEBI" id="CHEBI:59789"/>
        <dbReference type="ChEBI" id="CHEBI:87133"/>
    </reaction>
    <physiologicalReaction direction="left-to-right" evidence="4">
        <dbReference type="Rhea" id="RHEA:46949"/>
    </physiologicalReaction>
</comment>
<comment type="cofactor">
    <cofactor evidence="4">
        <name>Mg(2+)</name>
        <dbReference type="ChEBI" id="CHEBI:18420"/>
    </cofactor>
    <text evidence="4">For methyltransferase activity.</text>
</comment>
<comment type="activity regulation">
    <text evidence="4">Putative protease: Inhibited by chymostatin.</text>
</comment>
<comment type="subunit">
    <text evidence="12">The protease domain interacts with host EIF2AK4 (via C-terminus); this interaction inhibits dimerization of EIF2AK4 and prevents EIF2AK4-mediated phosphorylation of host EIF2A.</text>
</comment>
<comment type="subcellular location">
    <subcellularLocation>
        <location evidence="4">Host cytoplasm</location>
    </subcellularLocation>
    <subcellularLocation>
        <location evidence="4">Host cytoplasm</location>
        <location evidence="4">Host perinuclear region</location>
    </subcellularLocation>
</comment>
<comment type="domain">
    <text evidence="4 11">Contains a methyltransferase domain, a Y-domain, a putative protease region, a zinc-binding region with similarity to calycins, a proline-rich disordered hypervariable region (HVR), a macro domain (also called X-domain), a helicase domain and an RNA-dependent RNA polymerase domain (By similarity). Since the boundaries and the activity of the protease are not clearly defined, the zinc-binding region might be part of the protease (PubMed:31019049).</text>
</comment>
<comment type="PTM">
    <text evidence="4">ORF1 polyprotein does not seem to be processed into distinct enzymatic domains by a viral protease belonging to ORF1, but could be processed by a host serine protease like thrombin.</text>
</comment>
<comment type="similarity">
    <text evidence="14">Belongs to the hepevirus non-structural polyprotein family.</text>
</comment>
<organismHost>
    <name type="scientific">Homo sapiens</name>
    <name type="common">Human</name>
    <dbReference type="NCBI Taxonomy" id="9606"/>
</organismHost>
<protein>
    <recommendedName>
        <fullName>Non-structural polyprotein pORF1</fullName>
    </recommendedName>
    <domain>
        <recommendedName>
            <fullName>Methyltransferase</fullName>
            <ecNumber evidence="3">2.1.1.-</ecNumber>
            <ecNumber evidence="4">2.7.7.-</ecNumber>
        </recommendedName>
    </domain>
    <domain>
        <recommendedName>
            <fullName evidence="14">Putative protease</fullName>
            <ecNumber evidence="4">3.4.22.-</ecNumber>
        </recommendedName>
        <alternativeName>
            <fullName evidence="13">Putative papain-like cysteine protease</fullName>
            <shortName evidence="13">PCP</shortName>
        </alternativeName>
    </domain>
    <domain>
        <recommendedName>
            <fullName>NTPase/helicase</fullName>
            <ecNumber evidence="4">3.6.4.-</ecNumber>
        </recommendedName>
    </domain>
    <domain>
        <recommendedName>
            <fullName>RNA-directed RNA polymerase</fullName>
            <shortName>RdRp</shortName>
            <ecNumber>2.7.7.48</ecNumber>
        </recommendedName>
    </domain>
</protein>
<name>POLN_HEVPA</name>
<gene>
    <name type="ORF">ORF1</name>
</gene>
<dbReference type="EC" id="2.1.1.-" evidence="3"/>
<dbReference type="EC" id="2.7.7.-" evidence="4"/>
<dbReference type="EC" id="3.4.22.-" evidence="4"/>
<dbReference type="EC" id="3.6.4.-" evidence="4"/>
<dbReference type="EC" id="2.7.7.48"/>
<dbReference type="EMBL" id="M80581">
    <property type="protein sequence ID" value="AAA45725.1"/>
    <property type="molecule type" value="Genomic_RNA"/>
</dbReference>
<dbReference type="EMBL" id="AF444002">
    <property type="protein sequence ID" value="AAL50055.1"/>
    <property type="molecule type" value="Genomic_RNA"/>
</dbReference>
<dbReference type="EMBL" id="AF444003">
    <property type="protein sequence ID" value="AAL50058.1"/>
    <property type="molecule type" value="Genomic_RNA"/>
</dbReference>
<dbReference type="PIR" id="A38196">
    <property type="entry name" value="A38196"/>
</dbReference>
<dbReference type="PDB" id="6NU9">
    <property type="method" value="X-ray"/>
    <property type="resolution" value="1.76 A"/>
    <property type="chains" value="A=510-691"/>
</dbReference>
<dbReference type="PDBsum" id="6NU9"/>
<dbReference type="SMR" id="P33424"/>
<dbReference type="Proteomes" id="UP000001322">
    <property type="component" value="Genome"/>
</dbReference>
<dbReference type="Proteomes" id="UP000008498">
    <property type="component" value="Genome"/>
</dbReference>
<dbReference type="Proteomes" id="UP000180763">
    <property type="component" value="Genome"/>
</dbReference>
<dbReference type="GO" id="GO:0044220">
    <property type="term" value="C:host cell perinuclear region of cytoplasm"/>
    <property type="evidence" value="ECO:0007669"/>
    <property type="project" value="UniProtKB-SubCell"/>
</dbReference>
<dbReference type="GO" id="GO:0005524">
    <property type="term" value="F:ATP binding"/>
    <property type="evidence" value="ECO:0007669"/>
    <property type="project" value="UniProtKB-KW"/>
</dbReference>
<dbReference type="GO" id="GO:0008234">
    <property type="term" value="F:cysteine-type peptidase activity"/>
    <property type="evidence" value="ECO:0007669"/>
    <property type="project" value="UniProtKB-KW"/>
</dbReference>
<dbReference type="GO" id="GO:0004386">
    <property type="term" value="F:helicase activity"/>
    <property type="evidence" value="ECO:0007669"/>
    <property type="project" value="UniProtKB-KW"/>
</dbReference>
<dbReference type="GO" id="GO:0046872">
    <property type="term" value="F:metal ion binding"/>
    <property type="evidence" value="ECO:0007669"/>
    <property type="project" value="UniProtKB-KW"/>
</dbReference>
<dbReference type="GO" id="GO:0008174">
    <property type="term" value="F:mRNA methyltransferase activity"/>
    <property type="evidence" value="ECO:0007669"/>
    <property type="project" value="InterPro"/>
</dbReference>
<dbReference type="GO" id="GO:0003723">
    <property type="term" value="F:RNA binding"/>
    <property type="evidence" value="ECO:0007669"/>
    <property type="project" value="UniProtKB-KW"/>
</dbReference>
<dbReference type="GO" id="GO:0003968">
    <property type="term" value="F:RNA-directed RNA polymerase activity"/>
    <property type="evidence" value="ECO:0007669"/>
    <property type="project" value="UniProtKB-KW"/>
</dbReference>
<dbReference type="GO" id="GO:0006351">
    <property type="term" value="P:DNA-templated transcription"/>
    <property type="evidence" value="ECO:0007669"/>
    <property type="project" value="InterPro"/>
</dbReference>
<dbReference type="GO" id="GO:0032259">
    <property type="term" value="P:methylation"/>
    <property type="evidence" value="ECO:0007669"/>
    <property type="project" value="UniProtKB-KW"/>
</dbReference>
<dbReference type="GO" id="GO:0016556">
    <property type="term" value="P:mRNA modification"/>
    <property type="evidence" value="ECO:0007669"/>
    <property type="project" value="InterPro"/>
</dbReference>
<dbReference type="GO" id="GO:0006508">
    <property type="term" value="P:proteolysis"/>
    <property type="evidence" value="ECO:0007669"/>
    <property type="project" value="UniProtKB-KW"/>
</dbReference>
<dbReference type="GO" id="GO:0006396">
    <property type="term" value="P:RNA processing"/>
    <property type="evidence" value="ECO:0007669"/>
    <property type="project" value="InterPro"/>
</dbReference>
<dbReference type="GO" id="GO:0019082">
    <property type="term" value="P:viral protein processing"/>
    <property type="evidence" value="ECO:0007669"/>
    <property type="project" value="InterPro"/>
</dbReference>
<dbReference type="GO" id="GO:0039694">
    <property type="term" value="P:viral RNA genome replication"/>
    <property type="evidence" value="ECO:0007669"/>
    <property type="project" value="InterPro"/>
</dbReference>
<dbReference type="CDD" id="cd23259">
    <property type="entry name" value="Hepeviridae_RdRp"/>
    <property type="match status" value="1"/>
</dbReference>
<dbReference type="CDD" id="cd21557">
    <property type="entry name" value="Macro_X_Nsp3-like"/>
    <property type="match status" value="1"/>
</dbReference>
<dbReference type="Gene3D" id="3.40.220.10">
    <property type="entry name" value="Leucine Aminopeptidase, subunit E, domain 1"/>
    <property type="match status" value="1"/>
</dbReference>
<dbReference type="Gene3D" id="3.40.50.300">
    <property type="entry name" value="P-loop containing nucleotide triphosphate hydrolases"/>
    <property type="match status" value="2"/>
</dbReference>
<dbReference type="InterPro" id="IPR027351">
    <property type="entry name" value="(+)RNA_virus_helicase_core_dom"/>
</dbReference>
<dbReference type="InterPro" id="IPR002588">
    <property type="entry name" value="Alphavirus-like_MT_dom"/>
</dbReference>
<dbReference type="InterPro" id="IPR043502">
    <property type="entry name" value="DNA/RNA_pol_sf"/>
</dbReference>
<dbReference type="InterPro" id="IPR008748">
    <property type="entry name" value="Hepatitis-E_Cys-pept"/>
</dbReference>
<dbReference type="InterPro" id="IPR022202">
    <property type="entry name" value="Hepatitis-E_hinge"/>
</dbReference>
<dbReference type="InterPro" id="IPR047307">
    <property type="entry name" value="Hepeviridae_RdRp"/>
</dbReference>
<dbReference type="InterPro" id="IPR002589">
    <property type="entry name" value="Macro_dom"/>
</dbReference>
<dbReference type="InterPro" id="IPR043472">
    <property type="entry name" value="Macro_dom-like"/>
</dbReference>
<dbReference type="InterPro" id="IPR044371">
    <property type="entry name" value="Macro_X_NSP3-like"/>
</dbReference>
<dbReference type="InterPro" id="IPR027417">
    <property type="entry name" value="P-loop_NTPase"/>
</dbReference>
<dbReference type="InterPro" id="IPR001788">
    <property type="entry name" value="RNA-dep_RNA_pol_alsuvir"/>
</dbReference>
<dbReference type="InterPro" id="IPR007094">
    <property type="entry name" value="RNA-dir_pol_PSvirus"/>
</dbReference>
<dbReference type="Pfam" id="PF12526">
    <property type="entry name" value="DUF3729"/>
    <property type="match status" value="1"/>
</dbReference>
<dbReference type="Pfam" id="PF01661">
    <property type="entry name" value="Macro"/>
    <property type="match status" value="1"/>
</dbReference>
<dbReference type="Pfam" id="PF05417">
    <property type="entry name" value="Peptidase_C41"/>
    <property type="match status" value="1"/>
</dbReference>
<dbReference type="Pfam" id="PF00978">
    <property type="entry name" value="RdRP_2"/>
    <property type="match status" value="1"/>
</dbReference>
<dbReference type="Pfam" id="PF01443">
    <property type="entry name" value="Viral_helicase1"/>
    <property type="match status" value="1"/>
</dbReference>
<dbReference type="Pfam" id="PF01660">
    <property type="entry name" value="Vmethyltransf"/>
    <property type="match status" value="1"/>
</dbReference>
<dbReference type="SMART" id="SM00506">
    <property type="entry name" value="A1pp"/>
    <property type="match status" value="1"/>
</dbReference>
<dbReference type="SUPFAM" id="SSF56672">
    <property type="entry name" value="DNA/RNA polymerases"/>
    <property type="match status" value="1"/>
</dbReference>
<dbReference type="SUPFAM" id="SSF52949">
    <property type="entry name" value="Macro domain-like"/>
    <property type="match status" value="1"/>
</dbReference>
<dbReference type="SUPFAM" id="SSF52540">
    <property type="entry name" value="P-loop containing nucleoside triphosphate hydrolases"/>
    <property type="match status" value="1"/>
</dbReference>
<dbReference type="PROSITE" id="PS51743">
    <property type="entry name" value="ALPHAVIRUS_MT"/>
    <property type="match status" value="1"/>
</dbReference>
<dbReference type="PROSITE" id="PS51154">
    <property type="entry name" value="MACRO"/>
    <property type="match status" value="1"/>
</dbReference>
<dbReference type="PROSITE" id="PS51657">
    <property type="entry name" value="PSRV_HELICASE"/>
    <property type="match status" value="1"/>
</dbReference>
<dbReference type="PROSITE" id="PS50507">
    <property type="entry name" value="RDRP_SSRNA_POS"/>
    <property type="match status" value="1"/>
</dbReference>